<dbReference type="EMBL" id="CU329671">
    <property type="protein sequence ID" value="CAB87366.1"/>
    <property type="molecule type" value="Genomic_DNA"/>
</dbReference>
<dbReference type="RefSeq" id="NP_595379.1">
    <property type="nucleotide sequence ID" value="NM_001021286.2"/>
</dbReference>
<dbReference type="BioGRID" id="277801">
    <property type="interactions" value="10"/>
</dbReference>
<dbReference type="PaxDb" id="4896-SPBP35G2.04c.1"/>
<dbReference type="EnsemblFungi" id="SPBP35G2.04c.1">
    <property type="protein sequence ID" value="SPBP35G2.04c.1:pep"/>
    <property type="gene ID" value="SPBP35G2.04c"/>
</dbReference>
<dbReference type="KEGG" id="spo:2541288"/>
<dbReference type="PomBase" id="SPBP35G2.04c"/>
<dbReference type="VEuPathDB" id="FungiDB:SPBP35G2.04c"/>
<dbReference type="HOGENOM" id="CLU_1235674_0_0_1"/>
<dbReference type="InParanoid" id="Q9P799"/>
<dbReference type="OMA" id="YIIDRQE"/>
<dbReference type="PRO" id="PR:Q9P799"/>
<dbReference type="Proteomes" id="UP000002485">
    <property type="component" value="Chromosome II"/>
</dbReference>
<dbReference type="GO" id="GO:0005829">
    <property type="term" value="C:cytosol"/>
    <property type="evidence" value="ECO:0007005"/>
    <property type="project" value="PomBase"/>
</dbReference>
<dbReference type="GO" id="GO:0005730">
    <property type="term" value="C:nucleolus"/>
    <property type="evidence" value="ECO:0007005"/>
    <property type="project" value="PomBase"/>
</dbReference>
<dbReference type="GO" id="GO:0005634">
    <property type="term" value="C:nucleus"/>
    <property type="evidence" value="ECO:0007005"/>
    <property type="project" value="PomBase"/>
</dbReference>
<reference key="1">
    <citation type="journal article" date="2002" name="Nature">
        <title>The genome sequence of Schizosaccharomyces pombe.</title>
        <authorList>
            <person name="Wood V."/>
            <person name="Gwilliam R."/>
            <person name="Rajandream M.A."/>
            <person name="Lyne M.H."/>
            <person name="Lyne R."/>
            <person name="Stewart A."/>
            <person name="Sgouros J.G."/>
            <person name="Peat N."/>
            <person name="Hayles J."/>
            <person name="Baker S.G."/>
            <person name="Basham D."/>
            <person name="Bowman S."/>
            <person name="Brooks K."/>
            <person name="Brown D."/>
            <person name="Brown S."/>
            <person name="Chillingworth T."/>
            <person name="Churcher C.M."/>
            <person name="Collins M."/>
            <person name="Connor R."/>
            <person name="Cronin A."/>
            <person name="Davis P."/>
            <person name="Feltwell T."/>
            <person name="Fraser A."/>
            <person name="Gentles S."/>
            <person name="Goble A."/>
            <person name="Hamlin N."/>
            <person name="Harris D.E."/>
            <person name="Hidalgo J."/>
            <person name="Hodgson G."/>
            <person name="Holroyd S."/>
            <person name="Hornsby T."/>
            <person name="Howarth S."/>
            <person name="Huckle E.J."/>
            <person name="Hunt S."/>
            <person name="Jagels K."/>
            <person name="James K.D."/>
            <person name="Jones L."/>
            <person name="Jones M."/>
            <person name="Leather S."/>
            <person name="McDonald S."/>
            <person name="McLean J."/>
            <person name="Mooney P."/>
            <person name="Moule S."/>
            <person name="Mungall K.L."/>
            <person name="Murphy L.D."/>
            <person name="Niblett D."/>
            <person name="Odell C."/>
            <person name="Oliver K."/>
            <person name="O'Neil S."/>
            <person name="Pearson D."/>
            <person name="Quail M.A."/>
            <person name="Rabbinowitsch E."/>
            <person name="Rutherford K.M."/>
            <person name="Rutter S."/>
            <person name="Saunders D."/>
            <person name="Seeger K."/>
            <person name="Sharp S."/>
            <person name="Skelton J."/>
            <person name="Simmonds M.N."/>
            <person name="Squares R."/>
            <person name="Squares S."/>
            <person name="Stevens K."/>
            <person name="Taylor K."/>
            <person name="Taylor R.G."/>
            <person name="Tivey A."/>
            <person name="Walsh S.V."/>
            <person name="Warren T."/>
            <person name="Whitehead S."/>
            <person name="Woodward J.R."/>
            <person name="Volckaert G."/>
            <person name="Aert R."/>
            <person name="Robben J."/>
            <person name="Grymonprez B."/>
            <person name="Weltjens I."/>
            <person name="Vanstreels E."/>
            <person name="Rieger M."/>
            <person name="Schaefer M."/>
            <person name="Mueller-Auer S."/>
            <person name="Gabel C."/>
            <person name="Fuchs M."/>
            <person name="Duesterhoeft A."/>
            <person name="Fritzc C."/>
            <person name="Holzer E."/>
            <person name="Moestl D."/>
            <person name="Hilbert H."/>
            <person name="Borzym K."/>
            <person name="Langer I."/>
            <person name="Beck A."/>
            <person name="Lehrach H."/>
            <person name="Reinhardt R."/>
            <person name="Pohl T.M."/>
            <person name="Eger P."/>
            <person name="Zimmermann W."/>
            <person name="Wedler H."/>
            <person name="Wambutt R."/>
            <person name="Purnelle B."/>
            <person name="Goffeau A."/>
            <person name="Cadieu E."/>
            <person name="Dreano S."/>
            <person name="Gloux S."/>
            <person name="Lelaure V."/>
            <person name="Mottier S."/>
            <person name="Galibert F."/>
            <person name="Aves S.J."/>
            <person name="Xiang Z."/>
            <person name="Hunt C."/>
            <person name="Moore K."/>
            <person name="Hurst S.M."/>
            <person name="Lucas M."/>
            <person name="Rochet M."/>
            <person name="Gaillardin C."/>
            <person name="Tallada V.A."/>
            <person name="Garzon A."/>
            <person name="Thode G."/>
            <person name="Daga R.R."/>
            <person name="Cruzado L."/>
            <person name="Jimenez J."/>
            <person name="Sanchez M."/>
            <person name="del Rey F."/>
            <person name="Benito J."/>
            <person name="Dominguez A."/>
            <person name="Revuelta J.L."/>
            <person name="Moreno S."/>
            <person name="Armstrong J."/>
            <person name="Forsburg S.L."/>
            <person name="Cerutti L."/>
            <person name="Lowe T."/>
            <person name="McCombie W.R."/>
            <person name="Paulsen I."/>
            <person name="Potashkin J."/>
            <person name="Shpakovski G.V."/>
            <person name="Ussery D."/>
            <person name="Barrell B.G."/>
            <person name="Nurse P."/>
        </authorList>
    </citation>
    <scope>NUCLEOTIDE SEQUENCE [LARGE SCALE GENOMIC DNA]</scope>
    <source>
        <strain>972 / ATCC 24843</strain>
    </source>
</reference>
<reference key="2">
    <citation type="journal article" date="2006" name="Nat. Biotechnol.">
        <title>ORFeome cloning and global analysis of protein localization in the fission yeast Schizosaccharomyces pombe.</title>
        <authorList>
            <person name="Matsuyama A."/>
            <person name="Arai R."/>
            <person name="Yashiroda Y."/>
            <person name="Shirai A."/>
            <person name="Kamata A."/>
            <person name="Sekido S."/>
            <person name="Kobayashi Y."/>
            <person name="Hashimoto A."/>
            <person name="Hamamoto M."/>
            <person name="Hiraoka Y."/>
            <person name="Horinouchi S."/>
            <person name="Yoshida M."/>
        </authorList>
    </citation>
    <scope>SUBCELLULAR LOCATION [LARGE SCALE ANALYSIS]</scope>
</reference>
<accession>Q9P799</accession>
<feature type="chain" id="PRO_0000304096" description="Uncharacterized protein P35G2.04c">
    <location>
        <begin position="1"/>
        <end position="249"/>
    </location>
</feature>
<organism>
    <name type="scientific">Schizosaccharomyces pombe (strain 972 / ATCC 24843)</name>
    <name type="common">Fission yeast</name>
    <dbReference type="NCBI Taxonomy" id="284812"/>
    <lineage>
        <taxon>Eukaryota</taxon>
        <taxon>Fungi</taxon>
        <taxon>Dikarya</taxon>
        <taxon>Ascomycota</taxon>
        <taxon>Taphrinomycotina</taxon>
        <taxon>Schizosaccharomycetes</taxon>
        <taxon>Schizosaccharomycetales</taxon>
        <taxon>Schizosaccharomycetaceae</taxon>
        <taxon>Schizosaccharomyces</taxon>
    </lineage>
</organism>
<keyword id="KW-0963">Cytoplasm</keyword>
<keyword id="KW-0539">Nucleus</keyword>
<keyword id="KW-1185">Reference proteome</keyword>
<name>YN84_SCHPO</name>
<protein>
    <recommendedName>
        <fullName>Uncharacterized protein P35G2.04c</fullName>
    </recommendedName>
</protein>
<proteinExistence type="predicted"/>
<comment type="subcellular location">
    <subcellularLocation>
        <location evidence="1">Cytoplasm</location>
    </subcellularLocation>
    <subcellularLocation>
        <location evidence="1">Nucleus</location>
        <location evidence="1">Nucleolus</location>
    </subcellularLocation>
</comment>
<sequence length="249" mass="29245">MISNSSIEDRINKNEAYIAKFFEIFSKNDKIRFHGVSLDRKALDSFMVRNNFKKRFVSGINLPILIRLHFYKKLFTILWLTVRTVALLSHARNIQCLIQESDGDAKDVARSIYITTAEFRNYLLTEKGFYVTTRSISHFRAILDSIRYPFGKDHASKNMELLPITYDLSFCTVFHGYLTSILEAYEFFRGVFKKYKAPLSSNFIAIGKTTDESNFSQLHHYFQKFDERIRRILHLISQELDGYCRIAKQ</sequence>
<evidence type="ECO:0000269" key="1">
    <source>
    </source>
</evidence>
<gene>
    <name type="ORF">SPBP35G2.04c</name>
</gene>